<feature type="initiator methionine" description="Removed" evidence="1">
    <location>
        <position position="1"/>
    </location>
</feature>
<feature type="chain" id="PRO_0000082475" description="Ubiquitin-conjugating enzyme E2 E3">
    <location>
        <begin position="2"/>
        <end position="207"/>
    </location>
</feature>
<feature type="domain" description="UBC core" evidence="2">
    <location>
        <begin position="61"/>
        <end position="207"/>
    </location>
</feature>
<feature type="region of interest" description="Disordered" evidence="4">
    <location>
        <begin position="1"/>
        <end position="63"/>
    </location>
</feature>
<feature type="compositionally biased region" description="Basic and acidic residues" evidence="4">
    <location>
        <begin position="1"/>
        <end position="10"/>
    </location>
</feature>
<feature type="compositionally biased region" description="Low complexity" evidence="4">
    <location>
        <begin position="50"/>
        <end position="63"/>
    </location>
</feature>
<feature type="active site" description="Glycyl thioester intermediate" evidence="2">
    <location>
        <position position="145"/>
    </location>
</feature>
<feature type="modified residue" description="N-acetylserine" evidence="1">
    <location>
        <position position="2"/>
    </location>
</feature>
<feature type="modified residue" description="Phosphoserine" evidence="1">
    <location>
        <position position="8"/>
    </location>
</feature>
<feature type="mutagenesis site" description="Loss of enzymatic activity, interaction with IPO11, nuclear import, and effect on cell growth." evidence="6 7 8">
    <original>C</original>
    <variation>S</variation>
    <variation>A</variation>
    <location>
        <position position="145"/>
    </location>
</feature>
<feature type="sequence conflict" description="In Ref. 1; CAA63352." evidence="9" ref="1">
    <original>E</original>
    <variation>K</variation>
    <location>
        <position position="31"/>
    </location>
</feature>
<reference key="1">
    <citation type="journal article" date="1996" name="J. Biol. Chem.">
        <title>Identification of a novel family of ubiquitin-conjugating enzymes with distinct amino-terminal extensions.</title>
        <authorList>
            <person name="Matuschewski K."/>
            <person name="Hauser H.P."/>
            <person name="Treier M."/>
            <person name="Jentsch S."/>
        </authorList>
    </citation>
    <scope>NUCLEOTIDE SEQUENCE [MRNA]</scope>
    <source>
        <strain>BALB/cJ</strain>
    </source>
</reference>
<reference key="2">
    <citation type="journal article" date="1998" name="Oncogene">
        <title>Isolation of growth suppressors from a cDNA expression library.</title>
        <authorList>
            <person name="Pestov D.G."/>
            <person name="Grzeszkiewicz T.M."/>
            <person name="Lau L.F."/>
        </authorList>
    </citation>
    <scope>NUCLEOTIDE SEQUENCE [MRNA]</scope>
    <scope>MUTAGENESIS OF CYS-145</scope>
    <source>
        <strain>SWR/J</strain>
    </source>
</reference>
<reference key="3">
    <citation type="journal article" date="2005" name="Science">
        <title>The transcriptional landscape of the mammalian genome.</title>
        <authorList>
            <person name="Carninci P."/>
            <person name="Kasukawa T."/>
            <person name="Katayama S."/>
            <person name="Gough J."/>
            <person name="Frith M.C."/>
            <person name="Maeda N."/>
            <person name="Oyama R."/>
            <person name="Ravasi T."/>
            <person name="Lenhard B."/>
            <person name="Wells C."/>
            <person name="Kodzius R."/>
            <person name="Shimokawa K."/>
            <person name="Bajic V.B."/>
            <person name="Brenner S.E."/>
            <person name="Batalov S."/>
            <person name="Forrest A.R."/>
            <person name="Zavolan M."/>
            <person name="Davis M.J."/>
            <person name="Wilming L.G."/>
            <person name="Aidinis V."/>
            <person name="Allen J.E."/>
            <person name="Ambesi-Impiombato A."/>
            <person name="Apweiler R."/>
            <person name="Aturaliya R.N."/>
            <person name="Bailey T.L."/>
            <person name="Bansal M."/>
            <person name="Baxter L."/>
            <person name="Beisel K.W."/>
            <person name="Bersano T."/>
            <person name="Bono H."/>
            <person name="Chalk A.M."/>
            <person name="Chiu K.P."/>
            <person name="Choudhary V."/>
            <person name="Christoffels A."/>
            <person name="Clutterbuck D.R."/>
            <person name="Crowe M.L."/>
            <person name="Dalla E."/>
            <person name="Dalrymple B.P."/>
            <person name="de Bono B."/>
            <person name="Della Gatta G."/>
            <person name="di Bernardo D."/>
            <person name="Down T."/>
            <person name="Engstrom P."/>
            <person name="Fagiolini M."/>
            <person name="Faulkner G."/>
            <person name="Fletcher C.F."/>
            <person name="Fukushima T."/>
            <person name="Furuno M."/>
            <person name="Futaki S."/>
            <person name="Gariboldi M."/>
            <person name="Georgii-Hemming P."/>
            <person name="Gingeras T.R."/>
            <person name="Gojobori T."/>
            <person name="Green R.E."/>
            <person name="Gustincich S."/>
            <person name="Harbers M."/>
            <person name="Hayashi Y."/>
            <person name="Hensch T.K."/>
            <person name="Hirokawa N."/>
            <person name="Hill D."/>
            <person name="Huminiecki L."/>
            <person name="Iacono M."/>
            <person name="Ikeo K."/>
            <person name="Iwama A."/>
            <person name="Ishikawa T."/>
            <person name="Jakt M."/>
            <person name="Kanapin A."/>
            <person name="Katoh M."/>
            <person name="Kawasawa Y."/>
            <person name="Kelso J."/>
            <person name="Kitamura H."/>
            <person name="Kitano H."/>
            <person name="Kollias G."/>
            <person name="Krishnan S.P."/>
            <person name="Kruger A."/>
            <person name="Kummerfeld S.K."/>
            <person name="Kurochkin I.V."/>
            <person name="Lareau L.F."/>
            <person name="Lazarevic D."/>
            <person name="Lipovich L."/>
            <person name="Liu J."/>
            <person name="Liuni S."/>
            <person name="McWilliam S."/>
            <person name="Madan Babu M."/>
            <person name="Madera M."/>
            <person name="Marchionni L."/>
            <person name="Matsuda H."/>
            <person name="Matsuzawa S."/>
            <person name="Miki H."/>
            <person name="Mignone F."/>
            <person name="Miyake S."/>
            <person name="Morris K."/>
            <person name="Mottagui-Tabar S."/>
            <person name="Mulder N."/>
            <person name="Nakano N."/>
            <person name="Nakauchi H."/>
            <person name="Ng P."/>
            <person name="Nilsson R."/>
            <person name="Nishiguchi S."/>
            <person name="Nishikawa S."/>
            <person name="Nori F."/>
            <person name="Ohara O."/>
            <person name="Okazaki Y."/>
            <person name="Orlando V."/>
            <person name="Pang K.C."/>
            <person name="Pavan W.J."/>
            <person name="Pavesi G."/>
            <person name="Pesole G."/>
            <person name="Petrovsky N."/>
            <person name="Piazza S."/>
            <person name="Reed J."/>
            <person name="Reid J.F."/>
            <person name="Ring B.Z."/>
            <person name="Ringwald M."/>
            <person name="Rost B."/>
            <person name="Ruan Y."/>
            <person name="Salzberg S.L."/>
            <person name="Sandelin A."/>
            <person name="Schneider C."/>
            <person name="Schoenbach C."/>
            <person name="Sekiguchi K."/>
            <person name="Semple C.A."/>
            <person name="Seno S."/>
            <person name="Sessa L."/>
            <person name="Sheng Y."/>
            <person name="Shibata Y."/>
            <person name="Shimada H."/>
            <person name="Shimada K."/>
            <person name="Silva D."/>
            <person name="Sinclair B."/>
            <person name="Sperling S."/>
            <person name="Stupka E."/>
            <person name="Sugiura K."/>
            <person name="Sultana R."/>
            <person name="Takenaka Y."/>
            <person name="Taki K."/>
            <person name="Tammoja K."/>
            <person name="Tan S.L."/>
            <person name="Tang S."/>
            <person name="Taylor M.S."/>
            <person name="Tegner J."/>
            <person name="Teichmann S.A."/>
            <person name="Ueda H.R."/>
            <person name="van Nimwegen E."/>
            <person name="Verardo R."/>
            <person name="Wei C.L."/>
            <person name="Yagi K."/>
            <person name="Yamanishi H."/>
            <person name="Zabarovsky E."/>
            <person name="Zhu S."/>
            <person name="Zimmer A."/>
            <person name="Hide W."/>
            <person name="Bult C."/>
            <person name="Grimmond S.M."/>
            <person name="Teasdale R.D."/>
            <person name="Liu E.T."/>
            <person name="Brusic V."/>
            <person name="Quackenbush J."/>
            <person name="Wahlestedt C."/>
            <person name="Mattick J.S."/>
            <person name="Hume D.A."/>
            <person name="Kai C."/>
            <person name="Sasaki D."/>
            <person name="Tomaru Y."/>
            <person name="Fukuda S."/>
            <person name="Kanamori-Katayama M."/>
            <person name="Suzuki M."/>
            <person name="Aoki J."/>
            <person name="Arakawa T."/>
            <person name="Iida J."/>
            <person name="Imamura K."/>
            <person name="Itoh M."/>
            <person name="Kato T."/>
            <person name="Kawaji H."/>
            <person name="Kawagashira N."/>
            <person name="Kawashima T."/>
            <person name="Kojima M."/>
            <person name="Kondo S."/>
            <person name="Konno H."/>
            <person name="Nakano K."/>
            <person name="Ninomiya N."/>
            <person name="Nishio T."/>
            <person name="Okada M."/>
            <person name="Plessy C."/>
            <person name="Shibata K."/>
            <person name="Shiraki T."/>
            <person name="Suzuki S."/>
            <person name="Tagami M."/>
            <person name="Waki K."/>
            <person name="Watahiki A."/>
            <person name="Okamura-Oho Y."/>
            <person name="Suzuki H."/>
            <person name="Kawai J."/>
            <person name="Hayashizaki Y."/>
        </authorList>
    </citation>
    <scope>NUCLEOTIDE SEQUENCE [LARGE SCALE MRNA]</scope>
    <source>
        <strain>C57BL/6J</strain>
        <strain>DBA/2J</strain>
    </source>
</reference>
<reference key="4">
    <citation type="journal article" date="2004" name="Genome Res.">
        <title>The status, quality, and expansion of the NIH full-length cDNA project: the Mammalian Gene Collection (MGC).</title>
        <authorList>
            <consortium name="The MGC Project Team"/>
        </authorList>
    </citation>
    <scope>NUCLEOTIDE SEQUENCE [LARGE SCALE MRNA]</scope>
    <source>
        <tissue>Liver</tissue>
    </source>
</reference>
<reference key="5">
    <citation type="journal article" date="2000" name="EMBO J.">
        <title>Importin-11, a nuclear import receptor for the ubiquitin-conjugating enzyme, UbcM2.</title>
        <authorList>
            <person name="Plafker S.M."/>
            <person name="Macara I.G."/>
        </authorList>
    </citation>
    <scope>INTERACTION WITH IPO11</scope>
    <scope>SUBCELLULAR LOCATION</scope>
</reference>
<reference key="6">
    <citation type="journal article" date="2004" name="J. Cell Biol.">
        <title>Ubiquitin charging of human class III ubiquitin-conjugating enzymes triggers their nuclear import.</title>
        <authorList>
            <person name="Plafker S.M."/>
            <person name="Plafker K.S."/>
            <person name="Weissman A.M."/>
            <person name="Macara I.G."/>
        </authorList>
    </citation>
    <scope>INTERACTION WITH IPO11</scope>
    <scope>SUBCELLULAR LOCATION</scope>
    <scope>MUTAGENESIS OF CYS-145</scope>
</reference>
<reference key="7">
    <citation type="journal article" date="2004" name="Mol. Cell. Biol.">
        <title>Participation of the ubiquitin-conjugating enzyme UBE2E3 in Nedd4-2-dependent regulation of the epithelial Na+ channel.</title>
        <authorList>
            <person name="Debonneville C."/>
            <person name="Staub O."/>
        </authorList>
    </citation>
    <scope>INTERACTION WITH NEDD4L</scope>
    <scope>MUTAGENESIS OF CYS-145</scope>
    <scope>FUNCTION</scope>
</reference>
<reference key="8">
    <citation type="journal article" date="2010" name="Cell">
        <title>A tissue-specific atlas of mouse protein phosphorylation and expression.</title>
        <authorList>
            <person name="Huttlin E.L."/>
            <person name="Jedrychowski M.P."/>
            <person name="Elias J.E."/>
            <person name="Goswami T."/>
            <person name="Rad R."/>
            <person name="Beausoleil S.A."/>
            <person name="Villen J."/>
            <person name="Haas W."/>
            <person name="Sowa M.E."/>
            <person name="Gygi S.P."/>
        </authorList>
    </citation>
    <scope>IDENTIFICATION BY MASS SPECTROMETRY [LARGE SCALE ANALYSIS]</scope>
    <source>
        <tissue>Brain</tissue>
    </source>
</reference>
<protein>
    <recommendedName>
        <fullName>Ubiquitin-conjugating enzyme E2 E3</fullName>
        <ecNumber>2.3.2.23</ecNumber>
    </recommendedName>
    <alternativeName>
        <fullName>E2 ubiquitin-conjugating enzyme E3</fullName>
    </alternativeName>
    <alternativeName>
        <fullName>UbcM2</fullName>
    </alternativeName>
    <alternativeName>
        <fullName>Ubiquitin carrier protein E3</fullName>
    </alternativeName>
    <alternativeName>
        <fullName>Ubiquitin-conjugating enzyme E2-23 kDa</fullName>
    </alternativeName>
    <alternativeName>
        <fullName>Ubiquitin-protein ligase E3</fullName>
    </alternativeName>
</protein>
<comment type="function">
    <text evidence="1 6">Accepts ubiquitin from the E1 complex and catalyzes its covalent attachment to other proteins. In vitro catalyzes 'Lys-11'- and 'Lys-48'-, as well as 'Lys-63'-linked polyubiquitination (By similarity). Participates in the regulation of transepithelial sodium transport in renal cells.</text>
</comment>
<comment type="catalytic activity">
    <reaction evidence="1 2 3">
        <text>S-ubiquitinyl-[E1 ubiquitin-activating enzyme]-L-cysteine + [E2 ubiquitin-conjugating enzyme]-L-cysteine = [E1 ubiquitin-activating enzyme]-L-cysteine + S-ubiquitinyl-[E2 ubiquitin-conjugating enzyme]-L-cysteine.</text>
        <dbReference type="EC" id="2.3.2.23"/>
    </reaction>
</comment>
<comment type="pathway">
    <text evidence="2">Protein modification; protein ubiquitination.</text>
</comment>
<comment type="subunit">
    <text evidence="5 6 7">Interacts with NEDD4L. The ubiquitin-loaded form interacts specifically with importin-11 (IPO11), leading to its import into the nucleus.</text>
</comment>
<comment type="subcellular location">
    <subcellularLocation>
        <location>Nucleus</location>
    </subcellularLocation>
    <subcellularLocation>
        <location>Cytoplasm</location>
    </subcellularLocation>
    <text>Shuttles between the nucleus and cytoplasm in a IPO11-dependent manner.</text>
</comment>
<comment type="similarity">
    <text evidence="2">Belongs to the ubiquitin-conjugating enzyme family.</text>
</comment>
<keyword id="KW-0007">Acetylation</keyword>
<keyword id="KW-0067">ATP-binding</keyword>
<keyword id="KW-0963">Cytoplasm</keyword>
<keyword id="KW-0341">Growth regulation</keyword>
<keyword id="KW-0547">Nucleotide-binding</keyword>
<keyword id="KW-0539">Nucleus</keyword>
<keyword id="KW-0597">Phosphoprotein</keyword>
<keyword id="KW-1185">Reference proteome</keyword>
<keyword id="KW-0808">Transferase</keyword>
<keyword id="KW-0833">Ubl conjugation pathway</keyword>
<organism>
    <name type="scientific">Mus musculus</name>
    <name type="common">Mouse</name>
    <dbReference type="NCBI Taxonomy" id="10090"/>
    <lineage>
        <taxon>Eukaryota</taxon>
        <taxon>Metazoa</taxon>
        <taxon>Chordata</taxon>
        <taxon>Craniata</taxon>
        <taxon>Vertebrata</taxon>
        <taxon>Euteleostomi</taxon>
        <taxon>Mammalia</taxon>
        <taxon>Eutheria</taxon>
        <taxon>Euarchontoglires</taxon>
        <taxon>Glires</taxon>
        <taxon>Rodentia</taxon>
        <taxon>Myomorpha</taxon>
        <taxon>Muroidea</taxon>
        <taxon>Muridae</taxon>
        <taxon>Murinae</taxon>
        <taxon>Mus</taxon>
        <taxon>Mus</taxon>
    </lineage>
</organism>
<dbReference type="EC" id="2.3.2.23"/>
<dbReference type="EMBL" id="X92664">
    <property type="protein sequence ID" value="CAA63352.1"/>
    <property type="molecule type" value="mRNA"/>
</dbReference>
<dbReference type="EMBL" id="AF003346">
    <property type="protein sequence ID" value="AAB60948.1"/>
    <property type="molecule type" value="mRNA"/>
</dbReference>
<dbReference type="EMBL" id="AK076011">
    <property type="protein sequence ID" value="BAC36118.1"/>
    <property type="molecule type" value="mRNA"/>
</dbReference>
<dbReference type="EMBL" id="AK168072">
    <property type="protein sequence ID" value="BAE40046.1"/>
    <property type="molecule type" value="mRNA"/>
</dbReference>
<dbReference type="EMBL" id="BC011477">
    <property type="protein sequence ID" value="AAH11477.1"/>
    <property type="molecule type" value="mRNA"/>
</dbReference>
<dbReference type="CCDS" id="CCDS16167.1"/>
<dbReference type="RefSeq" id="NP_001343324.1">
    <property type="nucleotide sequence ID" value="NM_001356395.2"/>
</dbReference>
<dbReference type="RefSeq" id="NP_001408107.1">
    <property type="nucleotide sequence ID" value="NM_001421178.1"/>
</dbReference>
<dbReference type="RefSeq" id="NP_001408108.1">
    <property type="nucleotide sequence ID" value="NM_001421179.1"/>
</dbReference>
<dbReference type="RefSeq" id="NP_001408109.1">
    <property type="nucleotide sequence ID" value="NM_001421180.1"/>
</dbReference>
<dbReference type="RefSeq" id="NP_001408110.1">
    <property type="nucleotide sequence ID" value="NM_001421181.1"/>
</dbReference>
<dbReference type="RefSeq" id="NP_001408111.1">
    <property type="nucleotide sequence ID" value="NM_001421182.1"/>
</dbReference>
<dbReference type="RefSeq" id="NP_033480.1">
    <property type="nucleotide sequence ID" value="NM_009454.3"/>
</dbReference>
<dbReference type="RefSeq" id="XP_006499224.1">
    <property type="nucleotide sequence ID" value="XM_006499161.3"/>
</dbReference>
<dbReference type="RefSeq" id="XP_006499225.1">
    <property type="nucleotide sequence ID" value="XM_006499162.3"/>
</dbReference>
<dbReference type="RefSeq" id="XP_006499226.1">
    <property type="nucleotide sequence ID" value="XM_006499163.3"/>
</dbReference>
<dbReference type="SMR" id="P52483"/>
<dbReference type="BioGRID" id="204405">
    <property type="interactions" value="16"/>
</dbReference>
<dbReference type="FunCoup" id="P52483">
    <property type="interactions" value="3598"/>
</dbReference>
<dbReference type="IntAct" id="P52483">
    <property type="interactions" value="1"/>
</dbReference>
<dbReference type="STRING" id="10090.ENSMUSP00000028398"/>
<dbReference type="iPTMnet" id="P52483"/>
<dbReference type="PhosphoSitePlus" id="P52483"/>
<dbReference type="SwissPalm" id="P52483"/>
<dbReference type="jPOST" id="P52483"/>
<dbReference type="PaxDb" id="10090-ENSMUSP00000028398"/>
<dbReference type="PeptideAtlas" id="P52483"/>
<dbReference type="ProteomicsDB" id="298172"/>
<dbReference type="Pumba" id="P52483"/>
<dbReference type="Antibodypedia" id="1150">
    <property type="antibodies" value="676 antibodies from 32 providers"/>
</dbReference>
<dbReference type="DNASU" id="22193"/>
<dbReference type="Ensembl" id="ENSMUST00000028398.14">
    <property type="protein sequence ID" value="ENSMUSP00000028398.8"/>
    <property type="gene ID" value="ENSMUSG00000027011.15"/>
</dbReference>
<dbReference type="Ensembl" id="ENSMUST00000121433.2">
    <property type="protein sequence ID" value="ENSMUSP00000113463.2"/>
    <property type="gene ID" value="ENSMUSG00000027011.15"/>
</dbReference>
<dbReference type="GeneID" id="22193"/>
<dbReference type="KEGG" id="mmu:22193"/>
<dbReference type="UCSC" id="uc008kgm.1">
    <property type="organism name" value="mouse"/>
</dbReference>
<dbReference type="AGR" id="MGI:107412"/>
<dbReference type="CTD" id="10477"/>
<dbReference type="MGI" id="MGI:107412">
    <property type="gene designation" value="Ube2e3"/>
</dbReference>
<dbReference type="VEuPathDB" id="HostDB:ENSMUSG00000027011"/>
<dbReference type="eggNOG" id="KOG0417">
    <property type="taxonomic scope" value="Eukaryota"/>
</dbReference>
<dbReference type="GeneTree" id="ENSGT00940000155392"/>
<dbReference type="HOGENOM" id="CLU_030988_14_4_1"/>
<dbReference type="InParanoid" id="P52483"/>
<dbReference type="OMA" id="GDRAKHD"/>
<dbReference type="OrthoDB" id="7851174at2759"/>
<dbReference type="PhylomeDB" id="P52483"/>
<dbReference type="TreeFam" id="TF101117"/>
<dbReference type="Reactome" id="R-MMU-8866652">
    <property type="pathway name" value="Synthesis of active ubiquitin: roles of E1 and E2 enzymes"/>
</dbReference>
<dbReference type="Reactome" id="R-MMU-983168">
    <property type="pathway name" value="Antigen processing: Ubiquitination &amp; Proteasome degradation"/>
</dbReference>
<dbReference type="UniPathway" id="UPA00143"/>
<dbReference type="BioGRID-ORCS" id="22193">
    <property type="hits" value="6 hits in 78 CRISPR screens"/>
</dbReference>
<dbReference type="ChiTaRS" id="Ube2e3">
    <property type="organism name" value="mouse"/>
</dbReference>
<dbReference type="PRO" id="PR:P52483"/>
<dbReference type="Proteomes" id="UP000000589">
    <property type="component" value="Chromosome 2"/>
</dbReference>
<dbReference type="RNAct" id="P52483">
    <property type="molecule type" value="protein"/>
</dbReference>
<dbReference type="Bgee" id="ENSMUSG00000027011">
    <property type="expression patterns" value="Expressed in pharyngeal arch 2 and 245 other cell types or tissues"/>
</dbReference>
<dbReference type="ExpressionAtlas" id="P52483">
    <property type="expression patterns" value="baseline and differential"/>
</dbReference>
<dbReference type="GO" id="GO:0005737">
    <property type="term" value="C:cytoplasm"/>
    <property type="evidence" value="ECO:0007669"/>
    <property type="project" value="UniProtKB-SubCell"/>
</dbReference>
<dbReference type="GO" id="GO:0005634">
    <property type="term" value="C:nucleus"/>
    <property type="evidence" value="ECO:0000314"/>
    <property type="project" value="MGI"/>
</dbReference>
<dbReference type="GO" id="GO:0005524">
    <property type="term" value="F:ATP binding"/>
    <property type="evidence" value="ECO:0007669"/>
    <property type="project" value="UniProtKB-KW"/>
</dbReference>
<dbReference type="GO" id="GO:0061631">
    <property type="term" value="F:ubiquitin conjugating enzyme activity"/>
    <property type="evidence" value="ECO:0000314"/>
    <property type="project" value="MGI"/>
</dbReference>
<dbReference type="GO" id="GO:0004842">
    <property type="term" value="F:ubiquitin-protein transferase activity"/>
    <property type="evidence" value="ECO:0000250"/>
    <property type="project" value="UniProtKB"/>
</dbReference>
<dbReference type="GO" id="GO:0070979">
    <property type="term" value="P:protein K11-linked ubiquitination"/>
    <property type="evidence" value="ECO:0000250"/>
    <property type="project" value="UniProtKB"/>
</dbReference>
<dbReference type="GO" id="GO:0070936">
    <property type="term" value="P:protein K48-linked ubiquitination"/>
    <property type="evidence" value="ECO:0000250"/>
    <property type="project" value="UniProtKB"/>
</dbReference>
<dbReference type="GO" id="GO:0070534">
    <property type="term" value="P:protein K63-linked ubiquitination"/>
    <property type="evidence" value="ECO:0000250"/>
    <property type="project" value="UniProtKB"/>
</dbReference>
<dbReference type="GO" id="GO:0006513">
    <property type="term" value="P:protein monoubiquitination"/>
    <property type="evidence" value="ECO:0007669"/>
    <property type="project" value="Ensembl"/>
</dbReference>
<dbReference type="CDD" id="cd23793">
    <property type="entry name" value="UBCc_UBE2E"/>
    <property type="match status" value="1"/>
</dbReference>
<dbReference type="FunFam" id="3.10.110.10:FF:000003">
    <property type="entry name" value="Ubiquitin-conjugating enzyme E2 E3"/>
    <property type="match status" value="1"/>
</dbReference>
<dbReference type="Gene3D" id="3.10.110.10">
    <property type="entry name" value="Ubiquitin Conjugating Enzyme"/>
    <property type="match status" value="1"/>
</dbReference>
<dbReference type="InterPro" id="IPR000608">
    <property type="entry name" value="UBQ-conjugat_E2_core"/>
</dbReference>
<dbReference type="InterPro" id="IPR023313">
    <property type="entry name" value="UBQ-conjugating_AS"/>
</dbReference>
<dbReference type="InterPro" id="IPR016135">
    <property type="entry name" value="UBQ-conjugating_enzyme/RWD"/>
</dbReference>
<dbReference type="PANTHER" id="PTHR24068">
    <property type="entry name" value="UBIQUITIN-CONJUGATING ENZYME E2"/>
    <property type="match status" value="1"/>
</dbReference>
<dbReference type="Pfam" id="PF00179">
    <property type="entry name" value="UQ_con"/>
    <property type="match status" value="1"/>
</dbReference>
<dbReference type="SMART" id="SM00212">
    <property type="entry name" value="UBCc"/>
    <property type="match status" value="1"/>
</dbReference>
<dbReference type="SUPFAM" id="SSF54495">
    <property type="entry name" value="UBC-like"/>
    <property type="match status" value="1"/>
</dbReference>
<dbReference type="PROSITE" id="PS00183">
    <property type="entry name" value="UBC_1"/>
    <property type="match status" value="1"/>
</dbReference>
<dbReference type="PROSITE" id="PS50127">
    <property type="entry name" value="UBC_2"/>
    <property type="match status" value="1"/>
</dbReference>
<evidence type="ECO:0000250" key="1">
    <source>
        <dbReference type="UniProtKB" id="Q969T4"/>
    </source>
</evidence>
<evidence type="ECO:0000255" key="2">
    <source>
        <dbReference type="PROSITE-ProRule" id="PRU00388"/>
    </source>
</evidence>
<evidence type="ECO:0000255" key="3">
    <source>
        <dbReference type="PROSITE-ProRule" id="PRU10133"/>
    </source>
</evidence>
<evidence type="ECO:0000256" key="4">
    <source>
        <dbReference type="SAM" id="MobiDB-lite"/>
    </source>
</evidence>
<evidence type="ECO:0000269" key="5">
    <source>
    </source>
</evidence>
<evidence type="ECO:0000269" key="6">
    <source>
    </source>
</evidence>
<evidence type="ECO:0000269" key="7">
    <source>
    </source>
</evidence>
<evidence type="ECO:0000269" key="8">
    <source>
    </source>
</evidence>
<evidence type="ECO:0000305" key="9"/>
<gene>
    <name type="primary">Ube2e3</name>
    <name type="synonym">Ubce4</name>
    <name type="synonym">Ubcm2</name>
</gene>
<name>UB2E3_MOUSE</name>
<accession>P52483</accession>
<accession>O09180</accession>
<accession>Q3TI00</accession>
<accession>Q91X63</accession>
<proteinExistence type="evidence at protein level"/>
<sequence>MSSDRQRSDDESPSTSSGSSDADQRDPAAPEPEEQEERKPSATQQKKNTKLSSKTTAKLSTSAKRIQKELAEITLDPPPNCSAGPKGDNIYEWRSTILGPPGSVYEGGVFFLDITFSSDYPFKPPKVTFRTRIYHCNINSQGVICLDILKDNWSPALTISKVLLSICSLLTDCNPADPLVGSIATQYLTNRAEHDRIARQWTKRYAT</sequence>